<evidence type="ECO:0000255" key="1">
    <source>
        <dbReference type="PROSITE-ProRule" id="PRU00112"/>
    </source>
</evidence>
<evidence type="ECO:0000255" key="2">
    <source>
        <dbReference type="PROSITE-ProRule" id="PRU00169"/>
    </source>
</evidence>
<name>ALGR_PSEAE</name>
<reference key="1">
    <citation type="journal article" date="1989" name="J. Bacteriol.">
        <title>The algR gene, which regulates mucoidy in Pseudomonas aeruginosa, belongs to a class of environmentally responsive genes.</title>
        <authorList>
            <person name="Deretic V."/>
            <person name="Dikshit R."/>
            <person name="Konyecsni W.M."/>
            <person name="Chakrabarty A.M."/>
            <person name="Misra T.K."/>
        </authorList>
    </citation>
    <scope>NUCLEOTIDE SEQUENCE [GENOMIC DNA]</scope>
    <source>
        <strain>8821</strain>
    </source>
</reference>
<reference key="2">
    <citation type="journal article" date="2000" name="Nature">
        <title>Complete genome sequence of Pseudomonas aeruginosa PAO1, an opportunistic pathogen.</title>
        <authorList>
            <person name="Stover C.K."/>
            <person name="Pham X.-Q.T."/>
            <person name="Erwin A.L."/>
            <person name="Mizoguchi S.D."/>
            <person name="Warrener P."/>
            <person name="Hickey M.J."/>
            <person name="Brinkman F.S.L."/>
            <person name="Hufnagle W.O."/>
            <person name="Kowalik D.J."/>
            <person name="Lagrou M."/>
            <person name="Garber R.L."/>
            <person name="Goltry L."/>
            <person name="Tolentino E."/>
            <person name="Westbrock-Wadman S."/>
            <person name="Yuan Y."/>
            <person name="Brody L.L."/>
            <person name="Coulter S.N."/>
            <person name="Folger K.R."/>
            <person name="Kas A."/>
            <person name="Larbig K."/>
            <person name="Lim R.M."/>
            <person name="Smith K.A."/>
            <person name="Spencer D.H."/>
            <person name="Wong G.K.-S."/>
            <person name="Wu Z."/>
            <person name="Paulsen I.T."/>
            <person name="Reizer J."/>
            <person name="Saier M.H. Jr."/>
            <person name="Hancock R.E.W."/>
            <person name="Lory S."/>
            <person name="Olson M.V."/>
        </authorList>
    </citation>
    <scope>NUCLEOTIDE SEQUENCE [LARGE SCALE GENOMIC DNA]</scope>
    <source>
        <strain>ATCC 15692 / DSM 22644 / CIP 104116 / JCM 14847 / LMG 12228 / 1C / PRS 101 / PAO1</strain>
    </source>
</reference>
<reference key="3">
    <citation type="journal article" date="1989" name="J. Bacteriol.">
        <title>Control of mucoidy in Pseudomonas aeruginosa: transcriptional regulation of algR and identification of the second regulatory gene, algQ.</title>
        <authorList>
            <person name="Deretic V."/>
            <person name="Konyecsni W.M."/>
        </authorList>
    </citation>
    <scope>NUCLEOTIDE SEQUENCE [GENOMIC DNA] OF 1-9</scope>
</reference>
<reference key="4">
    <citation type="journal article" date="1994" name="Mol. Gen. Genet.">
        <title>The Pseudomonas aeruginosa homologs of hemC and hemD are linked to the gene encoding the regulator of mucoidy AlgR.</title>
        <authorList>
            <person name="Mohr C.D."/>
            <person name="Sonsteby S.K."/>
            <person name="Deretic V."/>
        </authorList>
    </citation>
    <scope>NUCLEOTIDE SEQUENCE [GENOMIC DNA] OF 228-248</scope>
</reference>
<protein>
    <recommendedName>
        <fullName>Positive alginate biosynthesis regulatory protein</fullName>
    </recommendedName>
</protein>
<accession>P26275</accession>
<accession>Q6LDH9</accession>
<proteinExistence type="inferred from homology"/>
<organism>
    <name type="scientific">Pseudomonas aeruginosa (strain ATCC 15692 / DSM 22644 / CIP 104116 / JCM 14847 / LMG 12228 / 1C / PRS 101 / PAO1)</name>
    <dbReference type="NCBI Taxonomy" id="208964"/>
    <lineage>
        <taxon>Bacteria</taxon>
        <taxon>Pseudomonadati</taxon>
        <taxon>Pseudomonadota</taxon>
        <taxon>Gammaproteobacteria</taxon>
        <taxon>Pseudomonadales</taxon>
        <taxon>Pseudomonadaceae</taxon>
        <taxon>Pseudomonas</taxon>
    </lineage>
</organism>
<feature type="chain" id="PRO_0000081007" description="Positive alginate biosynthesis regulatory protein">
    <location>
        <begin position="1"/>
        <end position="248"/>
    </location>
</feature>
<feature type="domain" description="Response regulatory" evidence="2">
    <location>
        <begin position="2"/>
        <end position="117"/>
    </location>
</feature>
<feature type="domain" description="HTH LytTR-type" evidence="1">
    <location>
        <begin position="142"/>
        <end position="247"/>
    </location>
</feature>
<feature type="modified residue" description="4-aspartylphosphate" evidence="2">
    <location>
        <position position="54"/>
    </location>
</feature>
<gene>
    <name type="primary">algR</name>
    <name type="ordered locus">PA5261</name>
</gene>
<comment type="function">
    <text>Positive regulator of the algD gene, which codes for a GDP-mannose dehydrogenase, a key step enzyme in the alginate biosynthesis pathway.</text>
</comment>
<comment type="pathway">
    <text>Glycan biosynthesis; alginate biosynthesis [regulation].</text>
</comment>
<keyword id="KW-0010">Activator</keyword>
<keyword id="KW-0016">Alginate biosynthesis</keyword>
<keyword id="KW-0238">DNA-binding</keyword>
<keyword id="KW-0597">Phosphoprotein</keyword>
<keyword id="KW-1185">Reference proteome</keyword>
<keyword id="KW-0804">Transcription</keyword>
<keyword id="KW-0805">Transcription regulation</keyword>
<keyword id="KW-0902">Two-component regulatory system</keyword>
<sequence length="248" mass="27608">MNVLIVDDEPLARERLARLVGQLDGYRVLEPSASNGEEALTLIDSLKPDIVLLDIRMPGLDGLQVAARLCEREAPPAVIFCTAHDEFALEAFQVSAVGYLVKPVRSEDLAEALKKASRPNRVQLAALTKPPASGGSGPRSHISARTRKGIELIPLEEVIFFIADHKYVTLRHAQGEVLLDEPLKALEDEFGERFVRIHRNALVARERIERLQRTPLGHFQLYLKGLDGDALTVSRRHVAGVRRLMHQL</sequence>
<dbReference type="EMBL" id="M23230">
    <property type="protein sequence ID" value="AAA25704.1"/>
    <property type="molecule type" value="Genomic_DNA"/>
</dbReference>
<dbReference type="EMBL" id="AE004091">
    <property type="protein sequence ID" value="AAG08646.1"/>
    <property type="molecule type" value="Genomic_DNA"/>
</dbReference>
<dbReference type="EMBL" id="M29096">
    <property type="protein sequence ID" value="AAA25706.1"/>
    <property type="molecule type" value="Genomic_DNA"/>
</dbReference>
<dbReference type="EMBL" id="M74844">
    <property type="protein sequence ID" value="AAA18906.1"/>
    <property type="molecule type" value="Genomic_DNA"/>
</dbReference>
<dbReference type="PIR" id="A32802">
    <property type="entry name" value="A32802"/>
</dbReference>
<dbReference type="RefSeq" id="NP_253948.1">
    <property type="nucleotide sequence ID" value="NC_002516.2"/>
</dbReference>
<dbReference type="RefSeq" id="WP_003096397.1">
    <property type="nucleotide sequence ID" value="NZ_QZGE01000002.1"/>
</dbReference>
<dbReference type="SMR" id="P26275"/>
<dbReference type="FunCoup" id="P26275">
    <property type="interactions" value="187"/>
</dbReference>
<dbReference type="STRING" id="208964.PA5261"/>
<dbReference type="PaxDb" id="208964-PA5261"/>
<dbReference type="DNASU" id="877674"/>
<dbReference type="GeneID" id="877674"/>
<dbReference type="KEGG" id="pae:PA5261"/>
<dbReference type="PATRIC" id="fig|208964.12.peg.5514"/>
<dbReference type="PseudoCAP" id="PA5261"/>
<dbReference type="HOGENOM" id="CLU_000445_14_1_6"/>
<dbReference type="InParanoid" id="P26275"/>
<dbReference type="OrthoDB" id="236568at2"/>
<dbReference type="PhylomeDB" id="P26275"/>
<dbReference type="BioCyc" id="PAER208964:G1FZ6-5382-MONOMER"/>
<dbReference type="UniPathway" id="UPA00286"/>
<dbReference type="PHI-base" id="PHI:6994"/>
<dbReference type="PHI-base" id="PHI:8158"/>
<dbReference type="Proteomes" id="UP000002438">
    <property type="component" value="Chromosome"/>
</dbReference>
<dbReference type="CollecTF" id="EXPREG_000009d0"/>
<dbReference type="GO" id="GO:0005829">
    <property type="term" value="C:cytosol"/>
    <property type="evidence" value="ECO:0000318"/>
    <property type="project" value="GO_Central"/>
</dbReference>
<dbReference type="GO" id="GO:0032993">
    <property type="term" value="C:protein-DNA complex"/>
    <property type="evidence" value="ECO:0000315"/>
    <property type="project" value="CollecTF"/>
</dbReference>
<dbReference type="GO" id="GO:0001216">
    <property type="term" value="F:DNA-binding transcription activator activity"/>
    <property type="evidence" value="ECO:0000353"/>
    <property type="project" value="CollecTF"/>
</dbReference>
<dbReference type="GO" id="GO:0001217">
    <property type="term" value="F:DNA-binding transcription repressor activity"/>
    <property type="evidence" value="ECO:0000315"/>
    <property type="project" value="CollecTF"/>
</dbReference>
<dbReference type="GO" id="GO:0000156">
    <property type="term" value="F:phosphorelay response regulator activity"/>
    <property type="evidence" value="ECO:0000318"/>
    <property type="project" value="GO_Central"/>
</dbReference>
<dbReference type="GO" id="GO:0043565">
    <property type="term" value="F:sequence-specific DNA binding"/>
    <property type="evidence" value="ECO:0000353"/>
    <property type="project" value="CollecTF"/>
</dbReference>
<dbReference type="GO" id="GO:0000976">
    <property type="term" value="F:transcription cis-regulatory region binding"/>
    <property type="evidence" value="ECO:0000315"/>
    <property type="project" value="CollecTF"/>
</dbReference>
<dbReference type="GO" id="GO:0042121">
    <property type="term" value="P:alginic acid biosynthetic process"/>
    <property type="evidence" value="ECO:0007669"/>
    <property type="project" value="UniProtKB-UniPathway"/>
</dbReference>
<dbReference type="GO" id="GO:0071978">
    <property type="term" value="P:bacterial-type flagellum-dependent swarming motility"/>
    <property type="evidence" value="ECO:0000315"/>
    <property type="project" value="PseudoCAP"/>
</dbReference>
<dbReference type="GO" id="GO:0045892">
    <property type="term" value="P:negative regulation of DNA-templated transcription"/>
    <property type="evidence" value="ECO:0000270"/>
    <property type="project" value="CollecTF"/>
</dbReference>
<dbReference type="GO" id="GO:2000147">
    <property type="term" value="P:positive regulation of cell motility"/>
    <property type="evidence" value="ECO:0000315"/>
    <property type="project" value="PseudoCAP"/>
</dbReference>
<dbReference type="GO" id="GO:0045893">
    <property type="term" value="P:positive regulation of DNA-templated transcription"/>
    <property type="evidence" value="ECO:0000269"/>
    <property type="project" value="CollecTF"/>
</dbReference>
<dbReference type="GO" id="GO:1900192">
    <property type="term" value="P:positive regulation of single-species biofilm formation"/>
    <property type="evidence" value="ECO:0000315"/>
    <property type="project" value="PseudoCAP"/>
</dbReference>
<dbReference type="GO" id="GO:0006355">
    <property type="term" value="P:regulation of DNA-templated transcription"/>
    <property type="evidence" value="ECO:0000269"/>
    <property type="project" value="CollecTF"/>
</dbReference>
<dbReference type="GO" id="GO:1901031">
    <property type="term" value="P:regulation of response to reactive oxygen species"/>
    <property type="evidence" value="ECO:0000315"/>
    <property type="project" value="PseudoCAP"/>
</dbReference>
<dbReference type="GO" id="GO:0043107">
    <property type="term" value="P:type IV pilus-dependent motility"/>
    <property type="evidence" value="ECO:0000315"/>
    <property type="project" value="PseudoCAP"/>
</dbReference>
<dbReference type="CDD" id="cd17532">
    <property type="entry name" value="REC_LytTR_AlgR-like"/>
    <property type="match status" value="1"/>
</dbReference>
<dbReference type="FunFam" id="3.40.50.2300:FF:000134">
    <property type="entry name" value="Autolysin response regulator LytR"/>
    <property type="match status" value="1"/>
</dbReference>
<dbReference type="FunFam" id="2.40.50.1020:FF:000002">
    <property type="entry name" value="DNA-binding response regulator AlgR"/>
    <property type="match status" value="1"/>
</dbReference>
<dbReference type="Gene3D" id="3.40.50.2300">
    <property type="match status" value="1"/>
</dbReference>
<dbReference type="Gene3D" id="2.40.50.1020">
    <property type="entry name" value="LytTr DNA-binding domain"/>
    <property type="match status" value="1"/>
</dbReference>
<dbReference type="InterPro" id="IPR011006">
    <property type="entry name" value="CheY-like_superfamily"/>
</dbReference>
<dbReference type="InterPro" id="IPR007492">
    <property type="entry name" value="LytTR_DNA-bd_dom"/>
</dbReference>
<dbReference type="InterPro" id="IPR001789">
    <property type="entry name" value="Sig_transdc_resp-reg_receiver"/>
</dbReference>
<dbReference type="InterPro" id="IPR039420">
    <property type="entry name" value="WalR-like"/>
</dbReference>
<dbReference type="PANTHER" id="PTHR48111">
    <property type="entry name" value="REGULATOR OF RPOS"/>
    <property type="match status" value="1"/>
</dbReference>
<dbReference type="PANTHER" id="PTHR48111:SF3">
    <property type="entry name" value="TRANSCRIPTIONAL REGULATORY PROTEIN BTSR"/>
    <property type="match status" value="1"/>
</dbReference>
<dbReference type="Pfam" id="PF04397">
    <property type="entry name" value="LytTR"/>
    <property type="match status" value="1"/>
</dbReference>
<dbReference type="Pfam" id="PF00072">
    <property type="entry name" value="Response_reg"/>
    <property type="match status" value="1"/>
</dbReference>
<dbReference type="SMART" id="SM00850">
    <property type="entry name" value="LytTR"/>
    <property type="match status" value="1"/>
</dbReference>
<dbReference type="SMART" id="SM00448">
    <property type="entry name" value="REC"/>
    <property type="match status" value="1"/>
</dbReference>
<dbReference type="SUPFAM" id="SSF52172">
    <property type="entry name" value="CheY-like"/>
    <property type="match status" value="1"/>
</dbReference>
<dbReference type="PROSITE" id="PS50930">
    <property type="entry name" value="HTH_LYTTR"/>
    <property type="match status" value="1"/>
</dbReference>
<dbReference type="PROSITE" id="PS50110">
    <property type="entry name" value="RESPONSE_REGULATORY"/>
    <property type="match status" value="1"/>
</dbReference>